<sequence>MKELFLIIGAPGSGKTTDASLIAQADATNITHYSTGDLLRAEVASGSELGKTIDSFISKGNLVPLDVVINTIVYALKAAPTKTIIIDGYPRSVEQMMEFDKVLSEQNEICLKGVIEVRVSEEVAKERVLGRNRGADDNEEVFYNRMKVYTEPLNEILDFYQKKKLHFIIDGERTIEPIVADMKELIKKIQSI</sequence>
<reference key="1">
    <citation type="journal article" date="2000" name="Nature">
        <title>The genome sequence of the food-borne pathogen Campylobacter jejuni reveals hypervariable sequences.</title>
        <authorList>
            <person name="Parkhill J."/>
            <person name="Wren B.W."/>
            <person name="Mungall K.L."/>
            <person name="Ketley J.M."/>
            <person name="Churcher C.M."/>
            <person name="Basham D."/>
            <person name="Chillingworth T."/>
            <person name="Davies R.M."/>
            <person name="Feltwell T."/>
            <person name="Holroyd S."/>
            <person name="Jagels K."/>
            <person name="Karlyshev A.V."/>
            <person name="Moule S."/>
            <person name="Pallen M.J."/>
            <person name="Penn C.W."/>
            <person name="Quail M.A."/>
            <person name="Rajandream M.A."/>
            <person name="Rutherford K.M."/>
            <person name="van Vliet A.H.M."/>
            <person name="Whitehead S."/>
            <person name="Barrell B.G."/>
        </authorList>
    </citation>
    <scope>NUCLEOTIDE SEQUENCE [LARGE SCALE GENOMIC DNA]</scope>
    <source>
        <strain>ATCC 700819 / NCTC 11168</strain>
    </source>
</reference>
<organism>
    <name type="scientific">Campylobacter jejuni subsp. jejuni serotype O:2 (strain ATCC 700819 / NCTC 11168)</name>
    <dbReference type="NCBI Taxonomy" id="192222"/>
    <lineage>
        <taxon>Bacteria</taxon>
        <taxon>Pseudomonadati</taxon>
        <taxon>Campylobacterota</taxon>
        <taxon>Epsilonproteobacteria</taxon>
        <taxon>Campylobacterales</taxon>
        <taxon>Campylobacteraceae</taxon>
        <taxon>Campylobacter</taxon>
    </lineage>
</organism>
<accession>Q9PHM8</accession>
<accession>Q0PAM9</accession>
<gene>
    <name evidence="1" type="primary">adk</name>
    <name type="ordered locus">Cj0639c</name>
</gene>
<keyword id="KW-0067">ATP-binding</keyword>
<keyword id="KW-0963">Cytoplasm</keyword>
<keyword id="KW-0418">Kinase</keyword>
<keyword id="KW-0545">Nucleotide biosynthesis</keyword>
<keyword id="KW-0547">Nucleotide-binding</keyword>
<keyword id="KW-1185">Reference proteome</keyword>
<keyword id="KW-0808">Transferase</keyword>
<evidence type="ECO:0000255" key="1">
    <source>
        <dbReference type="HAMAP-Rule" id="MF_00235"/>
    </source>
</evidence>
<feature type="chain" id="PRO_0000158748" description="Adenylate kinase">
    <location>
        <begin position="1"/>
        <end position="192"/>
    </location>
</feature>
<feature type="region of interest" description="NMP" evidence="1">
    <location>
        <begin position="34"/>
        <end position="63"/>
    </location>
</feature>
<feature type="region of interest" description="LID" evidence="1">
    <location>
        <begin position="130"/>
        <end position="136"/>
    </location>
</feature>
<feature type="binding site" evidence="1">
    <location>
        <begin position="12"/>
        <end position="17"/>
    </location>
    <ligand>
        <name>ATP</name>
        <dbReference type="ChEBI" id="CHEBI:30616"/>
    </ligand>
</feature>
<feature type="binding site" evidence="1">
    <location>
        <position position="35"/>
    </location>
    <ligand>
        <name>AMP</name>
        <dbReference type="ChEBI" id="CHEBI:456215"/>
    </ligand>
</feature>
<feature type="binding site" evidence="1">
    <location>
        <position position="40"/>
    </location>
    <ligand>
        <name>AMP</name>
        <dbReference type="ChEBI" id="CHEBI:456215"/>
    </ligand>
</feature>
<feature type="binding site" evidence="1">
    <location>
        <begin position="61"/>
        <end position="63"/>
    </location>
    <ligand>
        <name>AMP</name>
        <dbReference type="ChEBI" id="CHEBI:456215"/>
    </ligand>
</feature>
<feature type="binding site" evidence="1">
    <location>
        <begin position="88"/>
        <end position="91"/>
    </location>
    <ligand>
        <name>AMP</name>
        <dbReference type="ChEBI" id="CHEBI:456215"/>
    </ligand>
</feature>
<feature type="binding site" evidence="1">
    <location>
        <position position="95"/>
    </location>
    <ligand>
        <name>AMP</name>
        <dbReference type="ChEBI" id="CHEBI:456215"/>
    </ligand>
</feature>
<feature type="binding site" evidence="1">
    <location>
        <position position="131"/>
    </location>
    <ligand>
        <name>ATP</name>
        <dbReference type="ChEBI" id="CHEBI:30616"/>
    </ligand>
</feature>
<feature type="binding site" evidence="1">
    <location>
        <position position="133"/>
    </location>
    <ligand>
        <name>AMP</name>
        <dbReference type="ChEBI" id="CHEBI:456215"/>
    </ligand>
</feature>
<feature type="binding site" evidence="1">
    <location>
        <position position="145"/>
    </location>
    <ligand>
        <name>AMP</name>
        <dbReference type="ChEBI" id="CHEBI:456215"/>
    </ligand>
</feature>
<feature type="binding site" evidence="1">
    <location>
        <position position="173"/>
    </location>
    <ligand>
        <name>ATP</name>
        <dbReference type="ChEBI" id="CHEBI:30616"/>
    </ligand>
</feature>
<comment type="function">
    <text evidence="1">Catalyzes the reversible transfer of the terminal phosphate group between ATP and AMP. Plays an important role in cellular energy homeostasis and in adenine nucleotide metabolism.</text>
</comment>
<comment type="catalytic activity">
    <reaction evidence="1">
        <text>AMP + ATP = 2 ADP</text>
        <dbReference type="Rhea" id="RHEA:12973"/>
        <dbReference type="ChEBI" id="CHEBI:30616"/>
        <dbReference type="ChEBI" id="CHEBI:456215"/>
        <dbReference type="ChEBI" id="CHEBI:456216"/>
        <dbReference type="EC" id="2.7.4.3"/>
    </reaction>
</comment>
<comment type="pathway">
    <text evidence="1">Purine metabolism; AMP biosynthesis via salvage pathway; AMP from ADP: step 1/1.</text>
</comment>
<comment type="subunit">
    <text evidence="1">Monomer.</text>
</comment>
<comment type="subcellular location">
    <subcellularLocation>
        <location evidence="1">Cytoplasm</location>
    </subcellularLocation>
</comment>
<comment type="domain">
    <text evidence="1">Consists of three domains, a large central CORE domain and two small peripheral domains, NMPbind and LID, which undergo movements during catalysis. The LID domain closes over the site of phosphoryl transfer upon ATP binding. Assembling and dissambling the active center during each catalytic cycle provides an effective means to prevent ATP hydrolysis.</text>
</comment>
<comment type="similarity">
    <text evidence="1">Belongs to the adenylate kinase family.</text>
</comment>
<protein>
    <recommendedName>
        <fullName evidence="1">Adenylate kinase</fullName>
        <shortName evidence="1">AK</shortName>
        <ecNumber evidence="1">2.7.4.3</ecNumber>
    </recommendedName>
    <alternativeName>
        <fullName evidence="1">ATP-AMP transphosphorylase</fullName>
    </alternativeName>
    <alternativeName>
        <fullName evidence="1">ATP:AMP phosphotransferase</fullName>
    </alternativeName>
    <alternativeName>
        <fullName evidence="1">Adenylate monophosphate kinase</fullName>
    </alternativeName>
</protein>
<proteinExistence type="inferred from homology"/>
<name>KAD_CAMJE</name>
<dbReference type="EC" id="2.7.4.3" evidence="1"/>
<dbReference type="EMBL" id="AL111168">
    <property type="protein sequence ID" value="CAL34784.1"/>
    <property type="molecule type" value="Genomic_DNA"/>
</dbReference>
<dbReference type="PIR" id="F81412">
    <property type="entry name" value="F81412"/>
</dbReference>
<dbReference type="RefSeq" id="WP_002858481.1">
    <property type="nucleotide sequence ID" value="NZ_SZUC01000002.1"/>
</dbReference>
<dbReference type="RefSeq" id="YP_002344068.1">
    <property type="nucleotide sequence ID" value="NC_002163.1"/>
</dbReference>
<dbReference type="SMR" id="Q9PHM8"/>
<dbReference type="IntAct" id="Q9PHM8">
    <property type="interactions" value="7"/>
</dbReference>
<dbReference type="STRING" id="192222.Cj0639c"/>
<dbReference type="PaxDb" id="192222-Cj0639c"/>
<dbReference type="EnsemblBacteria" id="CAL34784">
    <property type="protein sequence ID" value="CAL34784"/>
    <property type="gene ID" value="Cj0639c"/>
</dbReference>
<dbReference type="GeneID" id="904969"/>
<dbReference type="KEGG" id="cje:Cj0639c"/>
<dbReference type="PATRIC" id="fig|192222.6.peg.631"/>
<dbReference type="eggNOG" id="COG0563">
    <property type="taxonomic scope" value="Bacteria"/>
</dbReference>
<dbReference type="HOGENOM" id="CLU_032354_4_1_7"/>
<dbReference type="OrthoDB" id="9805030at2"/>
<dbReference type="UniPathway" id="UPA00588">
    <property type="reaction ID" value="UER00649"/>
</dbReference>
<dbReference type="Proteomes" id="UP000000799">
    <property type="component" value="Chromosome"/>
</dbReference>
<dbReference type="GO" id="GO:0005737">
    <property type="term" value="C:cytoplasm"/>
    <property type="evidence" value="ECO:0007669"/>
    <property type="project" value="UniProtKB-SubCell"/>
</dbReference>
<dbReference type="GO" id="GO:0004017">
    <property type="term" value="F:adenylate kinase activity"/>
    <property type="evidence" value="ECO:0007669"/>
    <property type="project" value="UniProtKB-UniRule"/>
</dbReference>
<dbReference type="GO" id="GO:0005524">
    <property type="term" value="F:ATP binding"/>
    <property type="evidence" value="ECO:0007669"/>
    <property type="project" value="UniProtKB-UniRule"/>
</dbReference>
<dbReference type="GO" id="GO:0044209">
    <property type="term" value="P:AMP salvage"/>
    <property type="evidence" value="ECO:0007669"/>
    <property type="project" value="UniProtKB-UniRule"/>
</dbReference>
<dbReference type="CDD" id="cd01428">
    <property type="entry name" value="ADK"/>
    <property type="match status" value="1"/>
</dbReference>
<dbReference type="Gene3D" id="3.40.50.300">
    <property type="entry name" value="P-loop containing nucleotide triphosphate hydrolases"/>
    <property type="match status" value="1"/>
</dbReference>
<dbReference type="HAMAP" id="MF_00235">
    <property type="entry name" value="Adenylate_kinase_Adk"/>
    <property type="match status" value="1"/>
</dbReference>
<dbReference type="InterPro" id="IPR000850">
    <property type="entry name" value="Adenylat/UMP-CMP_kin"/>
</dbReference>
<dbReference type="InterPro" id="IPR033690">
    <property type="entry name" value="Adenylat_kinase_CS"/>
</dbReference>
<dbReference type="InterPro" id="IPR027417">
    <property type="entry name" value="P-loop_NTPase"/>
</dbReference>
<dbReference type="NCBIfam" id="NF001384">
    <property type="entry name" value="PRK00279.2-2"/>
    <property type="match status" value="1"/>
</dbReference>
<dbReference type="PANTHER" id="PTHR23359">
    <property type="entry name" value="NUCLEOTIDE KINASE"/>
    <property type="match status" value="1"/>
</dbReference>
<dbReference type="Pfam" id="PF00406">
    <property type="entry name" value="ADK"/>
    <property type="match status" value="1"/>
</dbReference>
<dbReference type="PRINTS" id="PR00094">
    <property type="entry name" value="ADENYLTKNASE"/>
</dbReference>
<dbReference type="SUPFAM" id="SSF52540">
    <property type="entry name" value="P-loop containing nucleoside triphosphate hydrolases"/>
    <property type="match status" value="1"/>
</dbReference>
<dbReference type="PROSITE" id="PS00113">
    <property type="entry name" value="ADENYLATE_KINASE"/>
    <property type="match status" value="1"/>
</dbReference>